<geneLocation type="plasmid">
    <name>pVS1</name>
</geneLocation>
<sequence>MSEPKTGRGALFTGGLAAILASACCLGPLVLIALGFSGAWIGNLAVLEPYRPIFIGVALVALFFAWRRIYRQAAACKPGEVCAIPQVRATYKLIFWIVAALVLVALGFPYVMPFFY</sequence>
<evidence type="ECO:0000255" key="1"/>
<evidence type="ECO:0000269" key="2">
    <source>
    </source>
</evidence>
<evidence type="ECO:0000269" key="3">
    <source>
    </source>
</evidence>
<evidence type="ECO:0000269" key="4">
    <source>
    </source>
</evidence>
<evidence type="ECO:0000303" key="5">
    <source>
    </source>
</evidence>
<evidence type="ECO:0000305" key="6"/>
<evidence type="ECO:0000305" key="7">
    <source>
    </source>
</evidence>
<evidence type="ECO:0000305" key="8">
    <source>
    </source>
</evidence>
<accession>P04140</accession>
<keyword id="KW-0997">Cell inner membrane</keyword>
<keyword id="KW-1003">Cell membrane</keyword>
<keyword id="KW-0472">Membrane</keyword>
<keyword id="KW-0475">Mercuric resistance</keyword>
<keyword id="KW-0476">Mercury</keyword>
<keyword id="KW-0479">Metal-binding</keyword>
<keyword id="KW-0614">Plasmid</keyword>
<keyword id="KW-0812">Transmembrane</keyword>
<keyword id="KW-1133">Transmembrane helix</keyword>
<keyword id="KW-0813">Transport</keyword>
<keyword id="KW-0814">Transposable element</keyword>
<name>MERT_PSEAI</name>
<dbReference type="EMBL" id="Z00027">
    <property type="protein sequence ID" value="CAA77321.1"/>
    <property type="molecule type" value="Genomic_DNA"/>
</dbReference>
<dbReference type="EMBL" id="K02503">
    <property type="protein sequence ID" value="AAA27433.1"/>
    <property type="molecule type" value="Genomic_DNA"/>
</dbReference>
<dbReference type="PIR" id="A04457">
    <property type="entry name" value="QQPSHT"/>
</dbReference>
<dbReference type="RefSeq" id="WP_003131974.1">
    <property type="nucleotide sequence ID" value="NZ_WXZW01000069.1"/>
</dbReference>
<dbReference type="GeneID" id="94693671"/>
<dbReference type="eggNOG" id="COG2608">
    <property type="taxonomic scope" value="Bacteria"/>
</dbReference>
<dbReference type="GO" id="GO:0005886">
    <property type="term" value="C:plasma membrane"/>
    <property type="evidence" value="ECO:0007669"/>
    <property type="project" value="UniProtKB-SubCell"/>
</dbReference>
<dbReference type="GO" id="GO:0015097">
    <property type="term" value="F:mercury ion transmembrane transporter activity"/>
    <property type="evidence" value="ECO:0007669"/>
    <property type="project" value="InterPro"/>
</dbReference>
<dbReference type="GO" id="GO:0046872">
    <property type="term" value="F:metal ion binding"/>
    <property type="evidence" value="ECO:0007669"/>
    <property type="project" value="UniProtKB-KW"/>
</dbReference>
<dbReference type="Gene3D" id="1.10.287.910">
    <property type="entry name" value="bacterial mercury transporter, merf"/>
    <property type="match status" value="1"/>
</dbReference>
<dbReference type="InterPro" id="IPR003457">
    <property type="entry name" value="Transprt_MerT"/>
</dbReference>
<dbReference type="NCBIfam" id="NF010314">
    <property type="entry name" value="PRK13751.2"/>
    <property type="match status" value="1"/>
</dbReference>
<dbReference type="Pfam" id="PF02411">
    <property type="entry name" value="MerT"/>
    <property type="match status" value="1"/>
</dbReference>
<feature type="chain" id="PRO_0000096430" description="Mercuric transport protein MerT">
    <location>
        <begin position="1"/>
        <end position="116"/>
    </location>
</feature>
<feature type="transmembrane region" description="Helical" evidence="1">
    <location>
        <begin position="16"/>
        <end position="36"/>
    </location>
</feature>
<feature type="transmembrane region" description="Helical" evidence="1">
    <location>
        <begin position="44"/>
        <end position="64"/>
    </location>
</feature>
<feature type="transmembrane region" description="Helical" evidence="1">
    <location>
        <begin position="94"/>
        <end position="114"/>
    </location>
</feature>
<feature type="binding site" evidence="6">
    <location>
        <position position="24"/>
    </location>
    <ligand>
        <name>Hg(2+)</name>
        <dbReference type="ChEBI" id="CHEBI:16793"/>
    </ligand>
</feature>
<feature type="binding site" evidence="6">
    <location>
        <position position="25"/>
    </location>
    <ligand>
        <name>Hg(2+)</name>
        <dbReference type="ChEBI" id="CHEBI:16793"/>
    </ligand>
</feature>
<feature type="binding site" evidence="6">
    <location>
        <position position="76"/>
    </location>
    <ligand>
        <name>Hg(2+)</name>
        <dbReference type="ChEBI" id="CHEBI:16793"/>
    </ligand>
</feature>
<feature type="binding site" evidence="6">
    <location>
        <position position="82"/>
    </location>
    <ligand>
        <name>Hg(2+)</name>
        <dbReference type="ChEBI" id="CHEBI:16793"/>
    </ligand>
</feature>
<feature type="mutagenesis site" description="Abolishes mercury resistance." evidence="4">
    <original>G</original>
    <variation>R</variation>
    <location>
        <position position="14"/>
    </location>
</feature>
<feature type="mutagenesis site" description="Abolishes mercury resistance." evidence="4">
    <original>G</original>
    <variation>R</variation>
    <location>
        <position position="15"/>
    </location>
</feature>
<feature type="mutagenesis site" description="Abolishes mercury resistance." evidence="4">
    <original>A</original>
    <variation>D</variation>
    <location>
        <position position="18"/>
    </location>
</feature>
<feature type="mutagenesis site" description="Abolishes mercury resistance." evidence="4">
    <original>C</original>
    <variation>R</variation>
    <location>
        <position position="24"/>
    </location>
</feature>
<feature type="mutagenesis site" description="Abolishes mercury resistance." evidence="4">
    <original>C</original>
    <variation>Y</variation>
    <location>
        <position position="25"/>
    </location>
</feature>
<feature type="mutagenesis site" description="Abolishes mercury resistance." evidence="4">
    <original>G</original>
    <variation>R</variation>
    <location>
        <position position="27"/>
    </location>
</feature>
<feature type="mutagenesis site" description="Decreases mercury transport." evidence="2">
    <original>C</original>
    <variation>S</variation>
    <location>
        <position position="76"/>
    </location>
</feature>
<feature type="mutagenesis site" description="Decreases mercury transport." evidence="2">
    <original>C</original>
    <variation>S</variation>
    <location>
        <position position="82"/>
    </location>
</feature>
<protein>
    <recommendedName>
        <fullName evidence="6">Mercuric transport protein MerT</fullName>
    </recommendedName>
    <alternativeName>
        <fullName evidence="5">Mercury ion transport protein</fullName>
    </alternativeName>
</protein>
<reference key="1">
    <citation type="journal article" date="1984" name="Proc. Natl. Acad. Sci. U.S.A.">
        <title>Mercuric ion-resistance operons of plasmid R100 and transposon Tn501: the beginning of the operon including the regulatory region and the first two structural genes.</title>
        <authorList>
            <person name="Misra T.K."/>
            <person name="Brown N.L."/>
            <person name="Fritzinger D.C."/>
            <person name="Pridmore R.D."/>
            <person name="Barnes W.M."/>
            <person name="Haberstroh L."/>
            <person name="Silver S."/>
        </authorList>
    </citation>
    <scope>NUCLEOTIDE SEQUENCE [GENOMIC DNA]</scope>
    <scope>PROBABLE FUNCTION</scope>
    <source>
        <transposon>Tn501</transposon>
    </source>
</reference>
<reference key="2">
    <citation type="journal article" date="1987" name="Gene">
        <title>Role of the merT and merP gene products of transposon Tn501 in the induction and expression of resistance to mercuric ions.</title>
        <authorList>
            <person name="Lund P.A."/>
            <person name="Brown N.L."/>
        </authorList>
    </citation>
    <scope>FUNCTION</scope>
    <scope>DISRUPTION PHENOTYPE</scope>
</reference>
<reference key="3">
    <citation type="journal article" date="1996" name="Mol. Gen. Genet.">
        <title>Overexpression of MerT, the mercuric ion transport protein of transposon Tn501, and genetic selection of mercury hypersensitivity mutations.</title>
        <authorList>
            <person name="Hobman J.L."/>
            <person name="Brown N.L."/>
        </authorList>
    </citation>
    <scope>FUNCTION</scope>
    <scope>MUTAGENESIS OF GLY-14; GLY-15; ALA-18; CYS-24; CYS-25 AND GLY-27</scope>
</reference>
<reference key="4">
    <citation type="journal article" date="2008" name="BioMetals">
        <title>Evidence for direct interactions between the mercuric ion transporter (MerT) and mercuric reductase (MerA) from the Tn501 mer operon.</title>
        <authorList>
            <person name="Schue M."/>
            <person name="Glendinning K.J."/>
            <person name="Hobman J.L."/>
            <person name="Brown N.L."/>
        </authorList>
    </citation>
    <scope>FUNCTION</scope>
    <scope>INTERACTION WITH MERA</scope>
    <scope>MUTAGENESIS OF CYS-76 AND CYS-82</scope>
</reference>
<proteinExistence type="evidence at protein level"/>
<organism>
    <name type="scientific">Pseudomonas aeruginosa</name>
    <dbReference type="NCBI Taxonomy" id="287"/>
    <lineage>
        <taxon>Bacteria</taxon>
        <taxon>Pseudomonadati</taxon>
        <taxon>Pseudomonadota</taxon>
        <taxon>Gammaproteobacteria</taxon>
        <taxon>Pseudomonadales</taxon>
        <taxon>Pseudomonadaceae</taxon>
        <taxon>Pseudomonas</taxon>
    </lineage>
</organism>
<gene>
    <name type="primary">merT</name>
</gene>
<comment type="function">
    <text evidence="3 4 7 8">Involved in mercury resistance (PubMed:3038684, PubMed:8569683). Probably transfers a mercuric ion from the periplasmic Hg(2+)-binding protein MerP to the cytoplasmic mercuric reductase MerA (Probable).</text>
</comment>
<comment type="subunit">
    <text evidence="2">Interacts with MerA.</text>
</comment>
<comment type="subcellular location">
    <subcellularLocation>
        <location evidence="6">Cell inner membrane</location>
        <topology evidence="1">Multi-pass membrane protein</topology>
    </subcellularLocation>
</comment>
<comment type="disruption phenotype">
    <text evidence="3">Merp-merT deletion mutant is unable to transport mercury into the cytoplasm and shows almost complete loss of the resistance phenotype.</text>
</comment>
<comment type="similarity">
    <text evidence="6">Belongs to the MerT family.</text>
</comment>